<dbReference type="EC" id="2.7.7.7" evidence="2 4"/>
<dbReference type="EMBL" id="AY136549">
    <property type="protein sequence ID" value="AAN52116.1"/>
    <property type="molecule type" value="mRNA"/>
</dbReference>
<dbReference type="EMBL" id="AK131239">
    <property type="protein sequence ID" value="BAD18421.1"/>
    <property type="status" value="ALT_SEQ"/>
    <property type="molecule type" value="mRNA"/>
</dbReference>
<dbReference type="EMBL" id="AK303673">
    <property type="protein sequence ID" value="BAG64670.1"/>
    <property type="molecule type" value="mRNA"/>
</dbReference>
<dbReference type="EMBL" id="DQ060036">
    <property type="protein sequence ID" value="AAY43130.1"/>
    <property type="molecule type" value="Genomic_DNA"/>
</dbReference>
<dbReference type="EMBL" id="AL136360">
    <property type="status" value="NOT_ANNOTATED_CDS"/>
    <property type="molecule type" value="Genomic_DNA"/>
</dbReference>
<dbReference type="EMBL" id="AL158068">
    <property type="status" value="NOT_ANNOTATED_CDS"/>
    <property type="molecule type" value="Genomic_DNA"/>
</dbReference>
<dbReference type="EMBL" id="CH471131">
    <property type="protein sequence ID" value="EAW82539.1"/>
    <property type="molecule type" value="Genomic_DNA"/>
</dbReference>
<dbReference type="CCDS" id="CCDS3360.1">
    <molecule id="Q7Z5Q5-1"/>
</dbReference>
<dbReference type="RefSeq" id="NP_861524.2">
    <molecule id="Q7Z5Q5-1"/>
    <property type="nucleotide sequence ID" value="NM_181808.4"/>
</dbReference>
<dbReference type="PDB" id="4XVI">
    <property type="method" value="X-ray"/>
    <property type="resolution" value="3.10 A"/>
    <property type="chains" value="A=194-859"/>
</dbReference>
<dbReference type="PDB" id="4XVK">
    <property type="method" value="X-ray"/>
    <property type="resolution" value="2.95 A"/>
    <property type="chains" value="A=194-859"/>
</dbReference>
<dbReference type="PDB" id="4XVL">
    <property type="method" value="X-ray"/>
    <property type="resolution" value="3.30 A"/>
    <property type="chains" value="A=194-859"/>
</dbReference>
<dbReference type="PDB" id="4XVM">
    <property type="method" value="X-ray"/>
    <property type="resolution" value="3.20 A"/>
    <property type="chains" value="A=194-859"/>
</dbReference>
<dbReference type="PDBsum" id="4XVI"/>
<dbReference type="PDBsum" id="4XVK"/>
<dbReference type="PDBsum" id="4XVL"/>
<dbReference type="PDBsum" id="4XVM"/>
<dbReference type="SMR" id="Q7Z5Q5"/>
<dbReference type="BioGRID" id="131695">
    <property type="interactions" value="31"/>
</dbReference>
<dbReference type="FunCoup" id="Q7Z5Q5">
    <property type="interactions" value="473"/>
</dbReference>
<dbReference type="STRING" id="9606.ENSP00000435506"/>
<dbReference type="BindingDB" id="Q7Z5Q5"/>
<dbReference type="ChEMBL" id="CHEMBL2010628"/>
<dbReference type="DrugBank" id="DB12151">
    <property type="generic name" value="Brincidofovir"/>
</dbReference>
<dbReference type="GlyGen" id="Q7Z5Q5">
    <property type="glycosylation" value="1 site"/>
</dbReference>
<dbReference type="iPTMnet" id="Q7Z5Q5"/>
<dbReference type="PhosphoSitePlus" id="Q7Z5Q5"/>
<dbReference type="BioMuta" id="POLN"/>
<dbReference type="DMDM" id="90101282"/>
<dbReference type="jPOST" id="Q7Z5Q5"/>
<dbReference type="MassIVE" id="Q7Z5Q5"/>
<dbReference type="PaxDb" id="9606-ENSP00000435506"/>
<dbReference type="PeptideAtlas" id="Q7Z5Q5"/>
<dbReference type="ProteomicsDB" id="69348">
    <molecule id="Q7Z5Q5-1"/>
</dbReference>
<dbReference type="Antibodypedia" id="22333">
    <property type="antibodies" value="70 antibodies from 16 providers"/>
</dbReference>
<dbReference type="DNASU" id="353497"/>
<dbReference type="Ensembl" id="ENST00000382865.5">
    <molecule id="Q7Z5Q5-1"/>
    <property type="protein sequence ID" value="ENSP00000372316.1"/>
    <property type="gene ID" value="ENSG00000130997.16"/>
</dbReference>
<dbReference type="Ensembl" id="ENST00000511885.6">
    <molecule id="Q7Z5Q5-1"/>
    <property type="protein sequence ID" value="ENSP00000435506.1"/>
    <property type="gene ID" value="ENSG00000130997.16"/>
</dbReference>
<dbReference type="GeneID" id="353497"/>
<dbReference type="KEGG" id="hsa:353497"/>
<dbReference type="MANE-Select" id="ENST00000511885.6">
    <property type="protein sequence ID" value="ENSP00000435506.1"/>
    <property type="RefSeq nucleotide sequence ID" value="NM_181808.4"/>
    <property type="RefSeq protein sequence ID" value="NP_861524.2"/>
</dbReference>
<dbReference type="UCSC" id="uc003ger.3">
    <molecule id="Q7Z5Q5-1"/>
    <property type="organism name" value="human"/>
</dbReference>
<dbReference type="AGR" id="HGNC:18870"/>
<dbReference type="CTD" id="353497"/>
<dbReference type="DisGeNET" id="353497"/>
<dbReference type="GeneCards" id="POLN"/>
<dbReference type="HGNC" id="HGNC:18870">
    <property type="gene designation" value="POLN"/>
</dbReference>
<dbReference type="HPA" id="ENSG00000130997">
    <property type="expression patterns" value="Tissue enhanced (adipose tissue, testis)"/>
</dbReference>
<dbReference type="MalaCards" id="POLN"/>
<dbReference type="MIM" id="610887">
    <property type="type" value="gene"/>
</dbReference>
<dbReference type="neXtProt" id="NX_Q7Z5Q5"/>
<dbReference type="OpenTargets" id="ENSG00000130997"/>
<dbReference type="PharmGKB" id="PA134979866"/>
<dbReference type="VEuPathDB" id="HostDB:ENSG00000130997"/>
<dbReference type="eggNOG" id="KOG0950">
    <property type="taxonomic scope" value="Eukaryota"/>
</dbReference>
<dbReference type="GeneTree" id="ENSGT00940000159015"/>
<dbReference type="HOGENOM" id="CLU_015708_0_0_1"/>
<dbReference type="InParanoid" id="Q7Z5Q5"/>
<dbReference type="OMA" id="RFLIMSN"/>
<dbReference type="OrthoDB" id="275278at2759"/>
<dbReference type="PAN-GO" id="Q7Z5Q5">
    <property type="GO annotations" value="2 GO annotations based on evolutionary models"/>
</dbReference>
<dbReference type="PhylomeDB" id="Q7Z5Q5"/>
<dbReference type="TreeFam" id="TF337202"/>
<dbReference type="PathwayCommons" id="Q7Z5Q5"/>
<dbReference type="Reactome" id="R-HSA-6783310">
    <property type="pathway name" value="Fanconi Anemia Pathway"/>
</dbReference>
<dbReference type="SignaLink" id="Q7Z5Q5"/>
<dbReference type="BioGRID-ORCS" id="353497">
    <property type="hits" value="8 hits in 1154 CRISPR screens"/>
</dbReference>
<dbReference type="ChiTaRS" id="POLN">
    <property type="organism name" value="human"/>
</dbReference>
<dbReference type="EvolutionaryTrace" id="Q7Z5Q5"/>
<dbReference type="GeneWiki" id="DNA_polymerase_nu"/>
<dbReference type="GenomeRNAi" id="353497"/>
<dbReference type="Pharos" id="Q7Z5Q5">
    <property type="development level" value="Tbio"/>
</dbReference>
<dbReference type="PRO" id="PR:Q7Z5Q5"/>
<dbReference type="Proteomes" id="UP000005640">
    <property type="component" value="Chromosome 4"/>
</dbReference>
<dbReference type="RNAct" id="Q7Z5Q5">
    <property type="molecule type" value="protein"/>
</dbReference>
<dbReference type="Bgee" id="ENSG00000130997">
    <property type="expression patterns" value="Expressed in caudate nucleus and 101 other cell types or tissues"/>
</dbReference>
<dbReference type="ExpressionAtlas" id="Q7Z5Q5">
    <property type="expression patterns" value="baseline and differential"/>
</dbReference>
<dbReference type="GO" id="GO:0005654">
    <property type="term" value="C:nucleoplasm"/>
    <property type="evidence" value="ECO:0000314"/>
    <property type="project" value="HPA"/>
</dbReference>
<dbReference type="GO" id="GO:0005634">
    <property type="term" value="C:nucleus"/>
    <property type="evidence" value="ECO:0000314"/>
    <property type="project" value="UniProtKB"/>
</dbReference>
<dbReference type="GO" id="GO:0030332">
    <property type="term" value="F:cyclin binding"/>
    <property type="evidence" value="ECO:0000353"/>
    <property type="project" value="UniProtKB"/>
</dbReference>
<dbReference type="GO" id="GO:0003677">
    <property type="term" value="F:DNA binding"/>
    <property type="evidence" value="ECO:0007669"/>
    <property type="project" value="UniProtKB-KW"/>
</dbReference>
<dbReference type="GO" id="GO:0003887">
    <property type="term" value="F:DNA-directed DNA polymerase activity"/>
    <property type="evidence" value="ECO:0000314"/>
    <property type="project" value="UniProtKB"/>
</dbReference>
<dbReference type="GO" id="GO:0006261">
    <property type="term" value="P:DNA-templated DNA replication"/>
    <property type="evidence" value="ECO:0007669"/>
    <property type="project" value="InterPro"/>
</dbReference>
<dbReference type="GO" id="GO:0006302">
    <property type="term" value="P:double-strand break repair"/>
    <property type="evidence" value="ECO:0000318"/>
    <property type="project" value="GO_Central"/>
</dbReference>
<dbReference type="GO" id="GO:0000724">
    <property type="term" value="P:double-strand break repair via homologous recombination"/>
    <property type="evidence" value="ECO:0000315"/>
    <property type="project" value="UniProtKB"/>
</dbReference>
<dbReference type="GO" id="GO:0036297">
    <property type="term" value="P:interstrand cross-link repair"/>
    <property type="evidence" value="ECO:0000315"/>
    <property type="project" value="UniProtKB"/>
</dbReference>
<dbReference type="GO" id="GO:0019985">
    <property type="term" value="P:translesion synthesis"/>
    <property type="evidence" value="ECO:0000314"/>
    <property type="project" value="UniProtKB"/>
</dbReference>
<dbReference type="CDD" id="cd08638">
    <property type="entry name" value="DNA_pol_A_theta"/>
    <property type="match status" value="1"/>
</dbReference>
<dbReference type="FunFam" id="1.10.150.20:FF:000002">
    <property type="entry name" value="DNA polymerase I"/>
    <property type="match status" value="1"/>
</dbReference>
<dbReference type="FunFam" id="1.20.1060.10:FF:000001">
    <property type="entry name" value="DNA polymerase I"/>
    <property type="match status" value="1"/>
</dbReference>
<dbReference type="FunFam" id="3.30.420.10:FF:000070">
    <property type="entry name" value="DNA polymerase nu"/>
    <property type="match status" value="1"/>
</dbReference>
<dbReference type="FunFam" id="3.30.70.370:FF:000008">
    <property type="entry name" value="DNA polymerase nu"/>
    <property type="match status" value="1"/>
</dbReference>
<dbReference type="Gene3D" id="3.30.70.370">
    <property type="match status" value="1"/>
</dbReference>
<dbReference type="Gene3D" id="1.10.150.20">
    <property type="entry name" value="5' to 3' exonuclease, C-terminal subdomain"/>
    <property type="match status" value="1"/>
</dbReference>
<dbReference type="Gene3D" id="3.30.420.10">
    <property type="entry name" value="Ribonuclease H-like superfamily/Ribonuclease H"/>
    <property type="match status" value="1"/>
</dbReference>
<dbReference type="Gene3D" id="1.20.1060.10">
    <property type="entry name" value="Taq DNA Polymerase, Chain T, domain 4"/>
    <property type="match status" value="1"/>
</dbReference>
<dbReference type="InterPro" id="IPR001098">
    <property type="entry name" value="DNA-dir_DNA_pol_A_palm_dom"/>
</dbReference>
<dbReference type="InterPro" id="IPR043502">
    <property type="entry name" value="DNA/RNA_pol_sf"/>
</dbReference>
<dbReference type="InterPro" id="IPR040940">
    <property type="entry name" value="DNA_pol_P_Exo"/>
</dbReference>
<dbReference type="InterPro" id="IPR002298">
    <property type="entry name" value="DNA_polymerase_A"/>
</dbReference>
<dbReference type="InterPro" id="IPR036397">
    <property type="entry name" value="RNaseH_sf"/>
</dbReference>
<dbReference type="PANTHER" id="PTHR10133">
    <property type="entry name" value="DNA POLYMERASE I"/>
    <property type="match status" value="1"/>
</dbReference>
<dbReference type="PANTHER" id="PTHR10133:SF27">
    <property type="entry name" value="DNA POLYMERASE NU"/>
    <property type="match status" value="1"/>
</dbReference>
<dbReference type="Pfam" id="PF00476">
    <property type="entry name" value="DNA_pol_A"/>
    <property type="match status" value="1"/>
</dbReference>
<dbReference type="Pfam" id="PF18049">
    <property type="entry name" value="DNA_pol_P_Exo"/>
    <property type="match status" value="1"/>
</dbReference>
<dbReference type="PRINTS" id="PR00868">
    <property type="entry name" value="DNAPOLI"/>
</dbReference>
<dbReference type="SMART" id="SM00482">
    <property type="entry name" value="POLAc"/>
    <property type="match status" value="1"/>
</dbReference>
<dbReference type="SUPFAM" id="SSF56672">
    <property type="entry name" value="DNA/RNA polymerases"/>
    <property type="match status" value="1"/>
</dbReference>
<keyword id="KW-0002">3D-structure</keyword>
<keyword id="KW-0025">Alternative splicing</keyword>
<keyword id="KW-0227">DNA damage</keyword>
<keyword id="KW-0234">DNA repair</keyword>
<keyword id="KW-0235">DNA replication</keyword>
<keyword id="KW-0238">DNA-binding</keyword>
<keyword id="KW-0239">DNA-directed DNA polymerase</keyword>
<keyword id="KW-0548">Nucleotidyltransferase</keyword>
<keyword id="KW-0539">Nucleus</keyword>
<keyword id="KW-1267">Proteomics identification</keyword>
<keyword id="KW-1185">Reference proteome</keyword>
<keyword id="KW-0808">Transferase</keyword>
<feature type="chain" id="PRO_0000227938" description="DNA polymerase nu">
    <location>
        <begin position="1"/>
        <end position="900"/>
    </location>
</feature>
<feature type="region of interest" description="Disordered" evidence="1">
    <location>
        <begin position="60"/>
        <end position="90"/>
    </location>
</feature>
<feature type="region of interest" description="Disordered" evidence="1">
    <location>
        <begin position="863"/>
        <end position="900"/>
    </location>
</feature>
<feature type="compositionally biased region" description="Basic and acidic residues" evidence="1">
    <location>
        <begin position="60"/>
        <end position="75"/>
    </location>
</feature>
<feature type="compositionally biased region" description="Polar residues" evidence="1">
    <location>
        <begin position="76"/>
        <end position="90"/>
    </location>
</feature>
<feature type="splice variant" id="VSP_054402" description="In isoform 2." evidence="11">
    <original>NIQGISKHPIQITTPKNFKGKEDKILTISPRAM</original>
    <variation>ICARQVASDFQKCVEVSDAMMNSSIFWWLLKLY</variation>
    <location>
        <begin position="578"/>
        <end position="610"/>
    </location>
</feature>
<feature type="splice variant" id="VSP_054403" description="In isoform 2." evidence="11">
    <location>
        <begin position="611"/>
        <end position="899"/>
    </location>
</feature>
<feature type="sequence variant" id="VAR_025647" description="In dbSNP:rs2353552." evidence="2 10">
    <original>Q</original>
    <variation>H</variation>
    <location>
        <position position="121"/>
    </location>
</feature>
<feature type="sequence variant" id="VAR_025648" description="In dbSNP:rs35884361." evidence="10">
    <original>R</original>
    <variation>G</variation>
    <location>
        <position position="201"/>
    </location>
</feature>
<feature type="sequence variant" id="VAR_025649" description="In dbSNP:rs10018786." evidence="10">
    <original>M</original>
    <variation>L</variation>
    <location>
        <position position="310"/>
    </location>
</feature>
<feature type="sequence variant" id="VAR_025650" description="In dbSNP:rs11725880." evidence="10">
    <original>P</original>
    <variation>S</variation>
    <location>
        <position position="315"/>
    </location>
</feature>
<feature type="sequence variant" id="VAR_025651" description="In dbSNP:rs10011549." evidence="10">
    <original>G</original>
    <variation>S</variation>
    <location>
        <position position="336"/>
    </location>
</feature>
<feature type="sequence variant" id="VAR_025652" description="In dbSNP:rs9328764." evidence="3 10">
    <original>R</original>
    <variation>C</variation>
    <location>
        <position position="425"/>
    </location>
</feature>
<feature type="sequence variant" id="VAR_025653" description="In dbSNP:rs34574483." evidence="10">
    <original>S</original>
    <variation>G</variation>
    <location>
        <position position="502"/>
    </location>
</feature>
<feature type="sequence variant" id="VAR_025654" description="In dbSNP:rs34554757." evidence="10">
    <original>F</original>
    <variation>L</variation>
    <location>
        <position position="711"/>
    </location>
</feature>
<feature type="mutagenesis site" description="Abolishes catalytic activity." evidence="2 4">
    <original>D</original>
    <variation>A</variation>
    <location>
        <position position="623"/>
    </location>
</feature>
<feature type="mutagenesis site" description="Reduces polymerase activity. No effect on accuracy." evidence="9">
    <original>E</original>
    <variation>R</variation>
    <location>
        <position position="675"/>
    </location>
</feature>
<feature type="mutagenesis site" description="No effect on polymerase activity. Increases accuracy by ten-fold." evidence="9">
    <original>K</original>
    <variation>A</variation>
    <location>
        <position position="679"/>
    </location>
</feature>
<feature type="sequence conflict" description="In Ref. 2; BAG64670." evidence="12" ref="2">
    <original>V</original>
    <variation>A</variation>
    <location>
        <position position="8"/>
    </location>
</feature>
<feature type="strand" evidence="14">
    <location>
        <begin position="196"/>
        <end position="199"/>
    </location>
</feature>
<feature type="helix" evidence="16">
    <location>
        <begin position="200"/>
        <end position="202"/>
    </location>
</feature>
<feature type="helix" evidence="14">
    <location>
        <begin position="205"/>
        <end position="217"/>
    </location>
</feature>
<feature type="strand" evidence="14">
    <location>
        <begin position="219"/>
        <end position="227"/>
    </location>
</feature>
<feature type="turn" evidence="16">
    <location>
        <begin position="233"/>
        <end position="235"/>
    </location>
</feature>
<feature type="strand" evidence="14">
    <location>
        <begin position="244"/>
        <end position="253"/>
    </location>
</feature>
<feature type="strand" evidence="14">
    <location>
        <begin position="273"/>
        <end position="275"/>
    </location>
</feature>
<feature type="strand" evidence="14">
    <location>
        <begin position="280"/>
        <end position="284"/>
    </location>
</feature>
<feature type="helix" evidence="14">
    <location>
        <begin position="293"/>
        <end position="311"/>
    </location>
</feature>
<feature type="strand" evidence="14">
    <location>
        <begin position="316"/>
        <end position="320"/>
    </location>
</feature>
<feature type="helix" evidence="14">
    <location>
        <begin position="321"/>
        <end position="332"/>
    </location>
</feature>
<feature type="helix" evidence="14">
    <location>
        <begin position="333"/>
        <end position="335"/>
    </location>
</feature>
<feature type="helix" evidence="14">
    <location>
        <begin position="338"/>
        <end position="340"/>
    </location>
</feature>
<feature type="helix" evidence="14">
    <location>
        <begin position="349"/>
        <end position="356"/>
    </location>
</feature>
<feature type="strand" evidence="15">
    <location>
        <begin position="358"/>
        <end position="360"/>
    </location>
</feature>
<feature type="helix" evidence="14">
    <location>
        <begin position="365"/>
        <end position="372"/>
    </location>
</feature>
<feature type="helix" evidence="14">
    <location>
        <begin position="390"/>
        <end position="417"/>
    </location>
</feature>
<feature type="helix" evidence="14">
    <location>
        <begin position="421"/>
        <end position="426"/>
    </location>
</feature>
<feature type="turn" evidence="14">
    <location>
        <begin position="427"/>
        <end position="430"/>
    </location>
</feature>
<feature type="helix" evidence="14">
    <location>
        <begin position="431"/>
        <end position="440"/>
    </location>
</feature>
<feature type="strand" evidence="14">
    <location>
        <begin position="443"/>
        <end position="445"/>
    </location>
</feature>
<feature type="helix" evidence="14">
    <location>
        <begin position="447"/>
        <end position="472"/>
    </location>
</feature>
<feature type="helix" evidence="14">
    <location>
        <begin position="481"/>
        <end position="488"/>
    </location>
</feature>
<feature type="turn" evidence="14">
    <location>
        <begin position="489"/>
        <end position="491"/>
    </location>
</feature>
<feature type="helix" evidence="14">
    <location>
        <begin position="494"/>
        <end position="497"/>
    </location>
</feature>
<feature type="strand" evidence="13">
    <location>
        <begin position="500"/>
        <end position="506"/>
    </location>
</feature>
<feature type="strand" evidence="13">
    <location>
        <begin position="508"/>
        <end position="511"/>
    </location>
</feature>
<feature type="helix" evidence="14">
    <location>
        <begin position="516"/>
        <end position="521"/>
    </location>
</feature>
<feature type="turn" evidence="14">
    <location>
        <begin position="522"/>
        <end position="525"/>
    </location>
</feature>
<feature type="helix" evidence="14">
    <location>
        <begin position="528"/>
        <end position="545"/>
    </location>
</feature>
<feature type="helix" evidence="14">
    <location>
        <begin position="547"/>
        <end position="550"/>
    </location>
</feature>
<feature type="strand" evidence="14">
    <location>
        <begin position="561"/>
        <end position="566"/>
    </location>
</feature>
<feature type="strand" evidence="14">
    <location>
        <begin position="568"/>
        <end position="570"/>
    </location>
</feature>
<feature type="strand" evidence="14">
    <location>
        <begin position="573"/>
        <end position="577"/>
    </location>
</feature>
<feature type="turn" evidence="16">
    <location>
        <begin position="579"/>
        <end position="581"/>
    </location>
</feature>
<feature type="strand" evidence="14">
    <location>
        <begin position="587"/>
        <end position="590"/>
    </location>
</feature>
<feature type="strand" evidence="14">
    <location>
        <begin position="602"/>
        <end position="605"/>
    </location>
</feature>
<feature type="helix" evidence="14">
    <location>
        <begin position="607"/>
        <end position="610"/>
    </location>
</feature>
<feature type="strand" evidence="14">
    <location>
        <begin position="618"/>
        <end position="624"/>
    </location>
</feature>
<feature type="helix" evidence="14">
    <location>
        <begin position="627"/>
        <end position="636"/>
    </location>
</feature>
<feature type="helix" evidence="14">
    <location>
        <begin position="639"/>
        <end position="643"/>
    </location>
</feature>
<feature type="helix" evidence="14">
    <location>
        <begin position="654"/>
        <end position="662"/>
    </location>
</feature>
<feature type="helix" evidence="16">
    <location>
        <begin position="666"/>
        <end position="668"/>
    </location>
</feature>
<feature type="helix" evidence="14">
    <location>
        <begin position="671"/>
        <end position="685"/>
    </location>
</feature>
<feature type="helix" evidence="14">
    <location>
        <begin position="690"/>
        <end position="696"/>
    </location>
</feature>
<feature type="helix" evidence="14">
    <location>
        <begin position="701"/>
        <end position="714"/>
    </location>
</feature>
<feature type="helix" evidence="14">
    <location>
        <begin position="717"/>
        <end position="732"/>
    </location>
</feature>
<feature type="strand" evidence="14">
    <location>
        <begin position="733"/>
        <end position="736"/>
    </location>
</feature>
<feature type="strand" evidence="15">
    <location>
        <begin position="738"/>
        <end position="740"/>
    </location>
</feature>
<feature type="strand" evidence="14">
    <location>
        <begin position="742"/>
        <end position="744"/>
    </location>
</feature>
<feature type="helix" evidence="14">
    <location>
        <begin position="746"/>
        <end position="749"/>
    </location>
</feature>
<feature type="helix" evidence="14">
    <location>
        <begin position="753"/>
        <end position="788"/>
    </location>
</feature>
<feature type="strand" evidence="14">
    <location>
        <begin position="796"/>
        <end position="801"/>
    </location>
</feature>
<feature type="strand" evidence="14">
    <location>
        <begin position="804"/>
        <end position="809"/>
    </location>
</feature>
<feature type="helix" evidence="14">
    <location>
        <begin position="811"/>
        <end position="813"/>
    </location>
</feature>
<feature type="helix" evidence="14">
    <location>
        <begin position="814"/>
        <end position="826"/>
    </location>
</feature>
<feature type="helix" evidence="14">
    <location>
        <begin position="827"/>
        <end position="829"/>
    </location>
</feature>
<feature type="strand" evidence="14">
    <location>
        <begin position="832"/>
        <end position="834"/>
    </location>
</feature>
<feature type="strand" evidence="14">
    <location>
        <begin position="844"/>
        <end position="853"/>
    </location>
</feature>
<evidence type="ECO:0000256" key="1">
    <source>
        <dbReference type="SAM" id="MobiDB-lite"/>
    </source>
</evidence>
<evidence type="ECO:0000269" key="2">
    <source>
    </source>
</evidence>
<evidence type="ECO:0000269" key="3">
    <source>
    </source>
</evidence>
<evidence type="ECO:0000269" key="4">
    <source>
    </source>
</evidence>
<evidence type="ECO:0000269" key="5">
    <source>
    </source>
</evidence>
<evidence type="ECO:0000269" key="6">
    <source>
    </source>
</evidence>
<evidence type="ECO:0000269" key="7">
    <source>
    </source>
</evidence>
<evidence type="ECO:0000269" key="8">
    <source>
    </source>
</evidence>
<evidence type="ECO:0000269" key="9">
    <source>
    </source>
</evidence>
<evidence type="ECO:0000269" key="10">
    <source ref="3"/>
</evidence>
<evidence type="ECO:0000303" key="11">
    <source>
    </source>
</evidence>
<evidence type="ECO:0000305" key="12"/>
<evidence type="ECO:0007829" key="13">
    <source>
        <dbReference type="PDB" id="4XVI"/>
    </source>
</evidence>
<evidence type="ECO:0007829" key="14">
    <source>
        <dbReference type="PDB" id="4XVK"/>
    </source>
</evidence>
<evidence type="ECO:0007829" key="15">
    <source>
        <dbReference type="PDB" id="4XVL"/>
    </source>
</evidence>
<evidence type="ECO:0007829" key="16">
    <source>
        <dbReference type="PDB" id="4XVM"/>
    </source>
</evidence>
<proteinExistence type="evidence at protein level"/>
<reference key="1">
    <citation type="journal article" date="2003" name="J. Biol. Chem.">
        <title>POLN, a nuclear PolA family DNA polymerase homologous to the DNA cross-link sensitivity protein Mus308.</title>
        <authorList>
            <person name="Marini F."/>
            <person name="Kim N."/>
            <person name="Schuffert A."/>
            <person name="Wood R.D."/>
        </authorList>
    </citation>
    <scope>NUCLEOTIDE SEQUENCE [MRNA] (ISOFORM 1)</scope>
    <scope>CATALYTIC ACTIVITY</scope>
    <scope>VARIANT HIS-121</scope>
    <scope>ALTERNATIVE SPLICING</scope>
    <scope>SUBCELLULAR LOCATION</scope>
    <scope>TISSUE SPECIFICITY</scope>
    <scope>MUTAGENESIS OF ASP-623</scope>
</reference>
<reference key="2">
    <citation type="journal article" date="2004" name="Nat. Genet.">
        <title>Complete sequencing and characterization of 21,243 full-length human cDNAs.</title>
        <authorList>
            <person name="Ota T."/>
            <person name="Suzuki Y."/>
            <person name="Nishikawa T."/>
            <person name="Otsuki T."/>
            <person name="Sugiyama T."/>
            <person name="Irie R."/>
            <person name="Wakamatsu A."/>
            <person name="Hayashi K."/>
            <person name="Sato H."/>
            <person name="Nagai K."/>
            <person name="Kimura K."/>
            <person name="Makita H."/>
            <person name="Sekine M."/>
            <person name="Obayashi M."/>
            <person name="Nishi T."/>
            <person name="Shibahara T."/>
            <person name="Tanaka T."/>
            <person name="Ishii S."/>
            <person name="Yamamoto J."/>
            <person name="Saito K."/>
            <person name="Kawai Y."/>
            <person name="Isono Y."/>
            <person name="Nakamura Y."/>
            <person name="Nagahari K."/>
            <person name="Murakami K."/>
            <person name="Yasuda T."/>
            <person name="Iwayanagi T."/>
            <person name="Wagatsuma M."/>
            <person name="Shiratori A."/>
            <person name="Sudo H."/>
            <person name="Hosoiri T."/>
            <person name="Kaku Y."/>
            <person name="Kodaira H."/>
            <person name="Kondo H."/>
            <person name="Sugawara M."/>
            <person name="Takahashi M."/>
            <person name="Kanda K."/>
            <person name="Yokoi T."/>
            <person name="Furuya T."/>
            <person name="Kikkawa E."/>
            <person name="Omura Y."/>
            <person name="Abe K."/>
            <person name="Kamihara K."/>
            <person name="Katsuta N."/>
            <person name="Sato K."/>
            <person name="Tanikawa M."/>
            <person name="Yamazaki M."/>
            <person name="Ninomiya K."/>
            <person name="Ishibashi T."/>
            <person name="Yamashita H."/>
            <person name="Murakawa K."/>
            <person name="Fujimori K."/>
            <person name="Tanai H."/>
            <person name="Kimata M."/>
            <person name="Watanabe M."/>
            <person name="Hiraoka S."/>
            <person name="Chiba Y."/>
            <person name="Ishida S."/>
            <person name="Ono Y."/>
            <person name="Takiguchi S."/>
            <person name="Watanabe S."/>
            <person name="Yosida M."/>
            <person name="Hotuta T."/>
            <person name="Kusano J."/>
            <person name="Kanehori K."/>
            <person name="Takahashi-Fujii A."/>
            <person name="Hara H."/>
            <person name="Tanase T.-O."/>
            <person name="Nomura Y."/>
            <person name="Togiya S."/>
            <person name="Komai F."/>
            <person name="Hara R."/>
            <person name="Takeuchi K."/>
            <person name="Arita M."/>
            <person name="Imose N."/>
            <person name="Musashino K."/>
            <person name="Yuuki H."/>
            <person name="Oshima A."/>
            <person name="Sasaki N."/>
            <person name="Aotsuka S."/>
            <person name="Yoshikawa Y."/>
            <person name="Matsunawa H."/>
            <person name="Ichihara T."/>
            <person name="Shiohata N."/>
            <person name="Sano S."/>
            <person name="Moriya S."/>
            <person name="Momiyama H."/>
            <person name="Satoh N."/>
            <person name="Takami S."/>
            <person name="Terashima Y."/>
            <person name="Suzuki O."/>
            <person name="Nakagawa S."/>
            <person name="Senoh A."/>
            <person name="Mizoguchi H."/>
            <person name="Goto Y."/>
            <person name="Shimizu F."/>
            <person name="Wakebe H."/>
            <person name="Hishigaki H."/>
            <person name="Watanabe T."/>
            <person name="Sugiyama A."/>
            <person name="Takemoto M."/>
            <person name="Kawakami B."/>
            <person name="Yamazaki M."/>
            <person name="Watanabe K."/>
            <person name="Kumagai A."/>
            <person name="Itakura S."/>
            <person name="Fukuzumi Y."/>
            <person name="Fujimori Y."/>
            <person name="Komiyama M."/>
            <person name="Tashiro H."/>
            <person name="Tanigami A."/>
            <person name="Fujiwara T."/>
            <person name="Ono T."/>
            <person name="Yamada K."/>
            <person name="Fujii Y."/>
            <person name="Ozaki K."/>
            <person name="Hirao M."/>
            <person name="Ohmori Y."/>
            <person name="Kawabata A."/>
            <person name="Hikiji T."/>
            <person name="Kobatake N."/>
            <person name="Inagaki H."/>
            <person name="Ikema Y."/>
            <person name="Okamoto S."/>
            <person name="Okitani R."/>
            <person name="Kawakami T."/>
            <person name="Noguchi S."/>
            <person name="Itoh T."/>
            <person name="Shigeta K."/>
            <person name="Senba T."/>
            <person name="Matsumura K."/>
            <person name="Nakajima Y."/>
            <person name="Mizuno T."/>
            <person name="Morinaga M."/>
            <person name="Sasaki M."/>
            <person name="Togashi T."/>
            <person name="Oyama M."/>
            <person name="Hata H."/>
            <person name="Watanabe M."/>
            <person name="Komatsu T."/>
            <person name="Mizushima-Sugano J."/>
            <person name="Satoh T."/>
            <person name="Shirai Y."/>
            <person name="Takahashi Y."/>
            <person name="Nakagawa K."/>
            <person name="Okumura K."/>
            <person name="Nagase T."/>
            <person name="Nomura N."/>
            <person name="Kikuchi H."/>
            <person name="Masuho Y."/>
            <person name="Yamashita R."/>
            <person name="Nakai K."/>
            <person name="Yada T."/>
            <person name="Nakamura Y."/>
            <person name="Ohara O."/>
            <person name="Isogai T."/>
            <person name="Sugano S."/>
        </authorList>
    </citation>
    <scope>NUCLEOTIDE SEQUENCE [LARGE SCALE MRNA] (ISOFORMS 1 AND 2)</scope>
    <scope>VARIANT CYS-425</scope>
    <source>
        <tissue>Brain</tissue>
        <tissue>Kidney</tissue>
    </source>
</reference>
<reference key="3">
    <citation type="submission" date="2005-05" db="EMBL/GenBank/DDBJ databases">
        <authorList>
            <consortium name="NIEHS SNPs program"/>
        </authorList>
    </citation>
    <scope>NUCLEOTIDE SEQUENCE [GENOMIC DNA]</scope>
    <scope>VARIANTS HIS-121; GLY-201; LEU-310; SER-315; SER-336; CYS-425; GLY-502 AND LEU-711</scope>
</reference>
<reference key="4">
    <citation type="journal article" date="2005" name="Nature">
        <title>Generation and annotation of the DNA sequences of human chromosomes 2 and 4.</title>
        <authorList>
            <person name="Hillier L.W."/>
            <person name="Graves T.A."/>
            <person name="Fulton R.S."/>
            <person name="Fulton L.A."/>
            <person name="Pepin K.H."/>
            <person name="Minx P."/>
            <person name="Wagner-McPherson C."/>
            <person name="Layman D."/>
            <person name="Wylie K."/>
            <person name="Sekhon M."/>
            <person name="Becker M.C."/>
            <person name="Fewell G.A."/>
            <person name="Delehaunty K.D."/>
            <person name="Miner T.L."/>
            <person name="Nash W.E."/>
            <person name="Kremitzki C."/>
            <person name="Oddy L."/>
            <person name="Du H."/>
            <person name="Sun H."/>
            <person name="Bradshaw-Cordum H."/>
            <person name="Ali J."/>
            <person name="Carter J."/>
            <person name="Cordes M."/>
            <person name="Harris A."/>
            <person name="Isak A."/>
            <person name="van Brunt A."/>
            <person name="Nguyen C."/>
            <person name="Du F."/>
            <person name="Courtney L."/>
            <person name="Kalicki J."/>
            <person name="Ozersky P."/>
            <person name="Abbott S."/>
            <person name="Armstrong J."/>
            <person name="Belter E.A."/>
            <person name="Caruso L."/>
            <person name="Cedroni M."/>
            <person name="Cotton M."/>
            <person name="Davidson T."/>
            <person name="Desai A."/>
            <person name="Elliott G."/>
            <person name="Erb T."/>
            <person name="Fronick C."/>
            <person name="Gaige T."/>
            <person name="Haakenson W."/>
            <person name="Haglund K."/>
            <person name="Holmes A."/>
            <person name="Harkins R."/>
            <person name="Kim K."/>
            <person name="Kruchowski S.S."/>
            <person name="Strong C.M."/>
            <person name="Grewal N."/>
            <person name="Goyea E."/>
            <person name="Hou S."/>
            <person name="Levy A."/>
            <person name="Martinka S."/>
            <person name="Mead K."/>
            <person name="McLellan M.D."/>
            <person name="Meyer R."/>
            <person name="Randall-Maher J."/>
            <person name="Tomlinson C."/>
            <person name="Dauphin-Kohlberg S."/>
            <person name="Kozlowicz-Reilly A."/>
            <person name="Shah N."/>
            <person name="Swearengen-Shahid S."/>
            <person name="Snider J."/>
            <person name="Strong J.T."/>
            <person name="Thompson J."/>
            <person name="Yoakum M."/>
            <person name="Leonard S."/>
            <person name="Pearman C."/>
            <person name="Trani L."/>
            <person name="Radionenko M."/>
            <person name="Waligorski J.E."/>
            <person name="Wang C."/>
            <person name="Rock S.M."/>
            <person name="Tin-Wollam A.-M."/>
            <person name="Maupin R."/>
            <person name="Latreille P."/>
            <person name="Wendl M.C."/>
            <person name="Yang S.-P."/>
            <person name="Pohl C."/>
            <person name="Wallis J.W."/>
            <person name="Spieth J."/>
            <person name="Bieri T.A."/>
            <person name="Berkowicz N."/>
            <person name="Nelson J.O."/>
            <person name="Osborne J."/>
            <person name="Ding L."/>
            <person name="Meyer R."/>
            <person name="Sabo A."/>
            <person name="Shotland Y."/>
            <person name="Sinha P."/>
            <person name="Wohldmann P.E."/>
            <person name="Cook L.L."/>
            <person name="Hickenbotham M.T."/>
            <person name="Eldred J."/>
            <person name="Williams D."/>
            <person name="Jones T.A."/>
            <person name="She X."/>
            <person name="Ciccarelli F.D."/>
            <person name="Izaurralde E."/>
            <person name="Taylor J."/>
            <person name="Schmutz J."/>
            <person name="Myers R.M."/>
            <person name="Cox D.R."/>
            <person name="Huang X."/>
            <person name="McPherson J.D."/>
            <person name="Mardis E.R."/>
            <person name="Clifton S.W."/>
            <person name="Warren W.C."/>
            <person name="Chinwalla A.T."/>
            <person name="Eddy S.R."/>
            <person name="Marra M.A."/>
            <person name="Ovcharenko I."/>
            <person name="Furey T.S."/>
            <person name="Miller W."/>
            <person name="Eichler E.E."/>
            <person name="Bork P."/>
            <person name="Suyama M."/>
            <person name="Torrents D."/>
            <person name="Waterston R.H."/>
            <person name="Wilson R.K."/>
        </authorList>
    </citation>
    <scope>NUCLEOTIDE SEQUENCE [LARGE SCALE GENOMIC DNA]</scope>
</reference>
<reference key="5">
    <citation type="submission" date="2005-09" db="EMBL/GenBank/DDBJ databases">
        <authorList>
            <person name="Mural R.J."/>
            <person name="Istrail S."/>
            <person name="Sutton G.G."/>
            <person name="Florea L."/>
            <person name="Halpern A.L."/>
            <person name="Mobarry C.M."/>
            <person name="Lippert R."/>
            <person name="Walenz B."/>
            <person name="Shatkay H."/>
            <person name="Dew I."/>
            <person name="Miller J.R."/>
            <person name="Flanigan M.J."/>
            <person name="Edwards N.J."/>
            <person name="Bolanos R."/>
            <person name="Fasulo D."/>
            <person name="Halldorsson B.V."/>
            <person name="Hannenhalli S."/>
            <person name="Turner R."/>
            <person name="Yooseph S."/>
            <person name="Lu F."/>
            <person name="Nusskern D.R."/>
            <person name="Shue B.C."/>
            <person name="Zheng X.H."/>
            <person name="Zhong F."/>
            <person name="Delcher A.L."/>
            <person name="Huson D.H."/>
            <person name="Kravitz S.A."/>
            <person name="Mouchard L."/>
            <person name="Reinert K."/>
            <person name="Remington K.A."/>
            <person name="Clark A.G."/>
            <person name="Waterman M.S."/>
            <person name="Eichler E.E."/>
            <person name="Adams M.D."/>
            <person name="Hunkapiller M.W."/>
            <person name="Myers E.W."/>
            <person name="Venter J.C."/>
        </authorList>
    </citation>
    <scope>NUCLEOTIDE SEQUENCE [LARGE SCALE GENOMIC DNA]</scope>
</reference>
<reference key="6">
    <citation type="journal article" date="2006" name="J. Biol. Chem.">
        <title>Human DNA polymerase N (POLN) is a low fidelity enzyme capable of error-free bypass of 5S-thymine glycol.</title>
        <authorList>
            <person name="Takata K."/>
            <person name="Shimizu T."/>
            <person name="Iwai S."/>
            <person name="Wood R.D."/>
        </authorList>
    </citation>
    <scope>FUNCTION</scope>
    <scope>CATALYTIC ACTIVITY</scope>
    <scope>ACTIVITY REGULATION</scope>
    <scope>BIOPHYSICOCHEMICAL PROPERTIES</scope>
    <scope>MUTAGENESIS OF ASP-623</scope>
</reference>
<reference key="7">
    <citation type="journal article" date="2007" name="DNA Repair">
        <title>A unique error signature for human DNA polymerase nu.</title>
        <authorList>
            <person name="Arana M.E."/>
            <person name="Takata K."/>
            <person name="Garcia-Diaz M."/>
            <person name="Wood R.D."/>
            <person name="Kunkel T.A."/>
        </authorList>
    </citation>
    <scope>FUNCTION</scope>
</reference>
<reference key="8">
    <citation type="journal article" date="2009" name="Biochemistry">
        <title>Evidence for the involvement of human DNA polymerase N in the repair of DNA interstrand cross-links.</title>
        <authorList>
            <person name="Zietlow L."/>
            <person name="Smith L.A."/>
            <person name="Bessho M."/>
            <person name="Bessho T."/>
        </authorList>
    </citation>
    <scope>FUNCTION</scope>
</reference>
<reference key="9">
    <citation type="journal article" date="2010" name="Chem. Res. Toxicol.">
        <title>Novel enzymatic function of DNA polymerase nu in translesion DNA synthesis past major groove DNA-peptide and DNA-DNA cross-links.</title>
        <authorList>
            <person name="Yamanaka K."/>
            <person name="Minko I.G."/>
            <person name="Takata K."/>
            <person name="Kolbanovskiy A."/>
            <person name="Kozekov I.D."/>
            <person name="Wood R.D."/>
            <person name="Rizzo C.J."/>
            <person name="Lloyd R.S."/>
        </authorList>
    </citation>
    <scope>FUNCTION</scope>
</reference>
<reference key="10">
    <citation type="journal article" date="2010" name="Mol. Cell. Biol.">
        <title>DNA polymerase POLN participates in cross-link repair and homologous recombination.</title>
        <authorList>
            <person name="Moldovan G.L."/>
            <person name="Madhavan M.V."/>
            <person name="Mirchandani K.D."/>
            <person name="McCaffrey R.M."/>
            <person name="Vinciguerra P."/>
            <person name="D'Andrea A.D."/>
        </authorList>
    </citation>
    <scope>FUNCTION</scope>
    <scope>INTERACTION WITH FANCD2; FANCI; PCNA; RAD51 AND HELQ</scope>
</reference>
<reference key="11">
    <citation type="journal article" date="2015" name="Nat. Struct. Mol. Biol.">
        <title>How a homolog of high-fidelity replicases conducts mutagenic DNA synthesis.</title>
        <authorList>
            <person name="Lee Y.S."/>
            <person name="Gao Y."/>
            <person name="Yang W."/>
        </authorList>
    </citation>
    <scope>X-RAY CRYSTALLOGRAPHY (2.95 ANGSTROMS) OF 194-859</scope>
    <scope>MUTAGENESIS OF GLU-675 AND LYS-679</scope>
</reference>
<sequence>MENYEALVGFDLCNTPLSSVAQKIMSAMHSGDLVDSKTWGKSTETMEVINKSSVKYSVQLEDRKTQSPEKKDLKSLRSQTSRGSAKLSPQSFSVRLTDQLSADQKQKSISSLTLSSCLIPQYNQEASVLQKKGHKRKHFLMENINNENKGSINLKRKHITYNNLSEKTSKQMALEEDTDDAEGYLNSGNSGALKKHFCDIRHLDDWAKSQLIEMLKQAAALVITVMYTDGSTQLGADQTPVSSVRGIVVLVKRQAEGGHGCPDAPACGPVLEGFVSDDPCIYIQIEHSAIWDQEQEAHQQFARNVLFQTMKCKCPVICFNAKDFVRIVLQFFGNDGSWKHVADFIGLDPRIAAWLIDPSDATPSFEDLVEKYCEKSITVKVNSTYGNSSRNIVNQNVRENLKTLYRLTMDLCSKLKDYGLWQLFRTLELPLIPILAVMESHAIQVNKEEMEKTSALLGARLKELEQEAHFVAGERFLITSNNQLREILFGKLKLHLLSQRNSLPRTGLQKYPSTSEAVLNALRDLHPLPKIILEYRQVHKIKSTFVDGLLACMKKGSISSTWNQTGTVTGRLSAKHPNIQGISKHPIQITTPKNFKGKEDKILTISPRAMFVSSKGHTFLAADFSQIELRILTHLSGDPELLKLFQESERDDVFSTLTSQWKDVPVEQVTHADREQTKKVVYAVVYGAGKERLAACLGVPIQEAAQFLESFLQKYKKIKDFARAAIAQCHQTGCVVSIMGRRRPLPRIHAHDQQLRAQAERQAVNFVVQGSAADLCKLAMIHVFTAVAASHTLTARLVAQIHDELLFEVEDPQIPECAALVRRTMESLEQVQALELQLQVPLKVSLSAGRSWGHLVPLQEAWGPPPGPCRTESPSNSLAAPGSPASTQPPPLHFSPSFCL</sequence>
<organism>
    <name type="scientific">Homo sapiens</name>
    <name type="common">Human</name>
    <dbReference type="NCBI Taxonomy" id="9606"/>
    <lineage>
        <taxon>Eukaryota</taxon>
        <taxon>Metazoa</taxon>
        <taxon>Chordata</taxon>
        <taxon>Craniata</taxon>
        <taxon>Vertebrata</taxon>
        <taxon>Euteleostomi</taxon>
        <taxon>Mammalia</taxon>
        <taxon>Eutheria</taxon>
        <taxon>Euarchontoglires</taxon>
        <taxon>Primates</taxon>
        <taxon>Haplorrhini</taxon>
        <taxon>Catarrhini</taxon>
        <taxon>Hominidae</taxon>
        <taxon>Homo</taxon>
    </lineage>
</organism>
<name>DPOLN_HUMAN</name>
<comment type="function">
    <text evidence="4 5 6 7 8 9">DNA polymerase with very low fidelity that catalyzes considerable misincorporation by inserting dTTP opposite a G template, and dGTP opposite a T template (PubMed:16787914, PubMed:17118716). Is the least accurate of the DNA polymerase A family (i.e. POLG, POLN and POLQ) (PubMed:17118716). Can perform accurate translesion DNA synthesis (TLS) past a 5S-thymine glycol. Can perform efficient strand displacement past a nick or a gap and gives rise to an amount of product similar to that on non-damaged template. Has no exonuclease activity (PubMed:16787914). Error-prone DNA polymerase that preferentially misincorporates dT regardless of template sequence (PubMed:25775266). May play a role in TLS during interstrand cross-link (ICL) repair (PubMed:19908865). May be involved in TLS when genomic replication is blocked by extremely large major groove DNA lesions. May function in the bypass of some DNA-protein and DNA-DNA cross-links. May have a role in cellular tolerance to DNA cross-linking agents (PubMed:20102227). Involved in the repair of DNA cross-links and double-strand break (DSB) resistance. Participates in FANCD2-mediated repair. Forms a complex with HELQ helicase that participates in homologous recombination (HR) repair and is essential for cellular protection against DNA cross-links (PubMed:19995904).</text>
</comment>
<comment type="catalytic activity">
    <reaction evidence="2 4">
        <text>DNA(n) + a 2'-deoxyribonucleoside 5'-triphosphate = DNA(n+1) + diphosphate</text>
        <dbReference type="Rhea" id="RHEA:22508"/>
        <dbReference type="Rhea" id="RHEA-COMP:17339"/>
        <dbReference type="Rhea" id="RHEA-COMP:17340"/>
        <dbReference type="ChEBI" id="CHEBI:33019"/>
        <dbReference type="ChEBI" id="CHEBI:61560"/>
        <dbReference type="ChEBI" id="CHEBI:173112"/>
        <dbReference type="EC" id="2.7.7.7"/>
    </reaction>
</comment>
<comment type="activity regulation">
    <text evidence="4">Inhibited by ddTTP.</text>
</comment>
<comment type="biophysicochemical properties">
    <kinetics>
        <KM evidence="4">7 uM for dATP:T</KM>
        <KM evidence="4">8.2 uM for dCTP:G</KM>
        <KM evidence="4">7.7 uM for dGTP:C</KM>
        <KM evidence="4">7.3 uM for dTTP:A</KM>
    </kinetics>
    <phDependence>
        <text evidence="4">Optimum pH is 8.8.</text>
    </phDependence>
</comment>
<comment type="subunit">
    <text evidence="7">Interacts with FANCD2, FANCI, PCNA, RAD51 and HELQ.</text>
</comment>
<comment type="subcellular location">
    <subcellularLocation>
        <location evidence="2">Nucleus</location>
    </subcellularLocation>
</comment>
<comment type="alternative products">
    <event type="alternative splicing"/>
    <isoform>
        <id>Q7Z5Q5-1</id>
        <name>1</name>
        <sequence type="displayed"/>
    </isoform>
    <isoform>
        <id>Q7Z5Q5-3</id>
        <name>2</name>
        <sequence type="described" ref="VSP_054402 VSP_054403"/>
    </isoform>
</comment>
<comment type="tissue specificity">
    <text evidence="2">Highly expressed in testis and heart. Weakly expressed in skeletal muscle.</text>
</comment>
<comment type="similarity">
    <text evidence="12">Belongs to the DNA polymerase type-A family.</text>
</comment>
<comment type="sequence caution" evidence="12">
    <conflict type="miscellaneous discrepancy">
        <sequence resource="EMBL-CDS" id="BAD18421"/>
    </conflict>
    <text>Probable cloning artifact.</text>
</comment>
<protein>
    <recommendedName>
        <fullName>DNA polymerase nu</fullName>
        <ecNumber evidence="2 4">2.7.7.7</ecNumber>
    </recommendedName>
</protein>
<gene>
    <name type="primary">POLN</name>
</gene>
<accession>Q7Z5Q5</accession>
<accession>A2A336</accession>
<accession>B4E158</accession>
<accession>Q4TTW4</accession>
<accession>Q6ZNF4</accession>